<protein>
    <recommendedName>
        <fullName evidence="1">tRNA-2-methylthio-N(6)-dimethylallyladenosine synthase</fullName>
        <ecNumber evidence="1">2.8.4.3</ecNumber>
    </recommendedName>
    <alternativeName>
        <fullName evidence="1">(Dimethylallyl)adenosine tRNA methylthiotransferase MiaB</fullName>
    </alternativeName>
    <alternativeName>
        <fullName evidence="1">tRNA-i(6)A37 methylthiotransferase</fullName>
    </alternativeName>
</protein>
<reference key="1">
    <citation type="submission" date="2008-01" db="EMBL/GenBank/DDBJ databases">
        <title>Complete sequence of Thermoanaerobacter sp. X514.</title>
        <authorList>
            <consortium name="US DOE Joint Genome Institute"/>
            <person name="Copeland A."/>
            <person name="Lucas S."/>
            <person name="Lapidus A."/>
            <person name="Barry K."/>
            <person name="Glavina del Rio T."/>
            <person name="Dalin E."/>
            <person name="Tice H."/>
            <person name="Pitluck S."/>
            <person name="Bruce D."/>
            <person name="Goodwin L."/>
            <person name="Saunders E."/>
            <person name="Brettin T."/>
            <person name="Detter J.C."/>
            <person name="Han C."/>
            <person name="Schmutz J."/>
            <person name="Larimer F."/>
            <person name="Land M."/>
            <person name="Hauser L."/>
            <person name="Kyrpides N."/>
            <person name="Kim E."/>
            <person name="Hemme C."/>
            <person name="Fields M.W."/>
            <person name="He Z."/>
            <person name="Zhou J."/>
            <person name="Richardson P."/>
        </authorList>
    </citation>
    <scope>NUCLEOTIDE SEQUENCE [LARGE SCALE GENOMIC DNA]</scope>
    <source>
        <strain>X514</strain>
    </source>
</reference>
<accession>B0K1A1</accession>
<evidence type="ECO:0000255" key="1">
    <source>
        <dbReference type="HAMAP-Rule" id="MF_01864"/>
    </source>
</evidence>
<evidence type="ECO:0000255" key="2">
    <source>
        <dbReference type="PROSITE-ProRule" id="PRU01266"/>
    </source>
</evidence>
<feature type="chain" id="PRO_0000374607" description="tRNA-2-methylthio-N(6)-dimethylallyladenosine synthase">
    <location>
        <begin position="1"/>
        <end position="471"/>
    </location>
</feature>
<feature type="domain" description="MTTase N-terminal" evidence="1">
    <location>
        <begin position="31"/>
        <end position="149"/>
    </location>
</feature>
<feature type="domain" description="Radical SAM core" evidence="2">
    <location>
        <begin position="172"/>
        <end position="402"/>
    </location>
</feature>
<feature type="domain" description="TRAM" evidence="1">
    <location>
        <begin position="405"/>
        <end position="468"/>
    </location>
</feature>
<feature type="binding site" evidence="1">
    <location>
        <position position="40"/>
    </location>
    <ligand>
        <name>[4Fe-4S] cluster</name>
        <dbReference type="ChEBI" id="CHEBI:49883"/>
        <label>1</label>
    </ligand>
</feature>
<feature type="binding site" evidence="1">
    <location>
        <position position="76"/>
    </location>
    <ligand>
        <name>[4Fe-4S] cluster</name>
        <dbReference type="ChEBI" id="CHEBI:49883"/>
        <label>1</label>
    </ligand>
</feature>
<feature type="binding site" evidence="1">
    <location>
        <position position="110"/>
    </location>
    <ligand>
        <name>[4Fe-4S] cluster</name>
        <dbReference type="ChEBI" id="CHEBI:49883"/>
        <label>1</label>
    </ligand>
</feature>
<feature type="binding site" evidence="1">
    <location>
        <position position="186"/>
    </location>
    <ligand>
        <name>[4Fe-4S] cluster</name>
        <dbReference type="ChEBI" id="CHEBI:49883"/>
        <label>2</label>
        <note>4Fe-4S-S-AdoMet</note>
    </ligand>
</feature>
<feature type="binding site" evidence="1">
    <location>
        <position position="190"/>
    </location>
    <ligand>
        <name>[4Fe-4S] cluster</name>
        <dbReference type="ChEBI" id="CHEBI:49883"/>
        <label>2</label>
        <note>4Fe-4S-S-AdoMet</note>
    </ligand>
</feature>
<feature type="binding site" evidence="1">
    <location>
        <position position="193"/>
    </location>
    <ligand>
        <name>[4Fe-4S] cluster</name>
        <dbReference type="ChEBI" id="CHEBI:49883"/>
        <label>2</label>
        <note>4Fe-4S-S-AdoMet</note>
    </ligand>
</feature>
<proteinExistence type="inferred from homology"/>
<dbReference type="EC" id="2.8.4.3" evidence="1"/>
<dbReference type="EMBL" id="CP000923">
    <property type="protein sequence ID" value="ABY92896.1"/>
    <property type="molecule type" value="Genomic_DNA"/>
</dbReference>
<dbReference type="RefSeq" id="WP_003866792.1">
    <property type="nucleotide sequence ID" value="NC_010320.1"/>
</dbReference>
<dbReference type="SMR" id="B0K1A1"/>
<dbReference type="KEGG" id="tex:Teth514_1610"/>
<dbReference type="HOGENOM" id="CLU_018697_2_0_9"/>
<dbReference type="Proteomes" id="UP000002155">
    <property type="component" value="Chromosome"/>
</dbReference>
<dbReference type="GO" id="GO:0005829">
    <property type="term" value="C:cytosol"/>
    <property type="evidence" value="ECO:0007669"/>
    <property type="project" value="TreeGrafter"/>
</dbReference>
<dbReference type="GO" id="GO:0051539">
    <property type="term" value="F:4 iron, 4 sulfur cluster binding"/>
    <property type="evidence" value="ECO:0007669"/>
    <property type="project" value="UniProtKB-UniRule"/>
</dbReference>
<dbReference type="GO" id="GO:0046872">
    <property type="term" value="F:metal ion binding"/>
    <property type="evidence" value="ECO:0007669"/>
    <property type="project" value="UniProtKB-KW"/>
</dbReference>
<dbReference type="GO" id="GO:0035597">
    <property type="term" value="F:N6-isopentenyladenosine methylthiotransferase activity"/>
    <property type="evidence" value="ECO:0007669"/>
    <property type="project" value="TreeGrafter"/>
</dbReference>
<dbReference type="CDD" id="cd01335">
    <property type="entry name" value="Radical_SAM"/>
    <property type="match status" value="1"/>
</dbReference>
<dbReference type="FunFam" id="3.40.50.12160:FF:000006">
    <property type="entry name" value="tRNA-2-methylthio-N(6)-dimethylallyladenosine synthase"/>
    <property type="match status" value="1"/>
</dbReference>
<dbReference type="FunFam" id="3.80.30.20:FF:000001">
    <property type="entry name" value="tRNA-2-methylthio-N(6)-dimethylallyladenosine synthase 2"/>
    <property type="match status" value="1"/>
</dbReference>
<dbReference type="Gene3D" id="3.40.50.12160">
    <property type="entry name" value="Methylthiotransferase, N-terminal domain"/>
    <property type="match status" value="1"/>
</dbReference>
<dbReference type="Gene3D" id="3.80.30.20">
    <property type="entry name" value="tm_1862 like domain"/>
    <property type="match status" value="1"/>
</dbReference>
<dbReference type="HAMAP" id="MF_01864">
    <property type="entry name" value="tRNA_metthiotr_MiaB"/>
    <property type="match status" value="1"/>
</dbReference>
<dbReference type="InterPro" id="IPR006638">
    <property type="entry name" value="Elp3/MiaA/NifB-like_rSAM"/>
</dbReference>
<dbReference type="InterPro" id="IPR005839">
    <property type="entry name" value="Methylthiotransferase"/>
</dbReference>
<dbReference type="InterPro" id="IPR020612">
    <property type="entry name" value="Methylthiotransferase_CS"/>
</dbReference>
<dbReference type="InterPro" id="IPR013848">
    <property type="entry name" value="Methylthiotransferase_N"/>
</dbReference>
<dbReference type="InterPro" id="IPR038135">
    <property type="entry name" value="Methylthiotransferase_N_sf"/>
</dbReference>
<dbReference type="InterPro" id="IPR006463">
    <property type="entry name" value="MiaB_methiolase"/>
</dbReference>
<dbReference type="InterPro" id="IPR007197">
    <property type="entry name" value="rSAM"/>
</dbReference>
<dbReference type="InterPro" id="IPR023404">
    <property type="entry name" value="rSAM_horseshoe"/>
</dbReference>
<dbReference type="InterPro" id="IPR002792">
    <property type="entry name" value="TRAM_dom"/>
</dbReference>
<dbReference type="NCBIfam" id="TIGR01574">
    <property type="entry name" value="miaB-methiolase"/>
    <property type="match status" value="1"/>
</dbReference>
<dbReference type="NCBIfam" id="TIGR00089">
    <property type="entry name" value="MiaB/RimO family radical SAM methylthiotransferase"/>
    <property type="match status" value="1"/>
</dbReference>
<dbReference type="PANTHER" id="PTHR43020">
    <property type="entry name" value="CDK5 REGULATORY SUBUNIT-ASSOCIATED PROTEIN 1"/>
    <property type="match status" value="1"/>
</dbReference>
<dbReference type="PANTHER" id="PTHR43020:SF2">
    <property type="entry name" value="MITOCHONDRIAL TRNA METHYLTHIOTRANSFERASE CDK5RAP1"/>
    <property type="match status" value="1"/>
</dbReference>
<dbReference type="Pfam" id="PF04055">
    <property type="entry name" value="Radical_SAM"/>
    <property type="match status" value="1"/>
</dbReference>
<dbReference type="Pfam" id="PF01938">
    <property type="entry name" value="TRAM"/>
    <property type="match status" value="1"/>
</dbReference>
<dbReference type="Pfam" id="PF00919">
    <property type="entry name" value="UPF0004"/>
    <property type="match status" value="1"/>
</dbReference>
<dbReference type="SFLD" id="SFLDF00273">
    <property type="entry name" value="(dimethylallyl)adenosine_tRNA"/>
    <property type="match status" value="1"/>
</dbReference>
<dbReference type="SFLD" id="SFLDG01082">
    <property type="entry name" value="B12-binding_domain_containing"/>
    <property type="match status" value="1"/>
</dbReference>
<dbReference type="SFLD" id="SFLDS00029">
    <property type="entry name" value="Radical_SAM"/>
    <property type="match status" value="1"/>
</dbReference>
<dbReference type="SMART" id="SM00729">
    <property type="entry name" value="Elp3"/>
    <property type="match status" value="1"/>
</dbReference>
<dbReference type="SUPFAM" id="SSF102114">
    <property type="entry name" value="Radical SAM enzymes"/>
    <property type="match status" value="1"/>
</dbReference>
<dbReference type="PROSITE" id="PS51449">
    <property type="entry name" value="MTTASE_N"/>
    <property type="match status" value="1"/>
</dbReference>
<dbReference type="PROSITE" id="PS01278">
    <property type="entry name" value="MTTASE_RADICAL"/>
    <property type="match status" value="1"/>
</dbReference>
<dbReference type="PROSITE" id="PS51918">
    <property type="entry name" value="RADICAL_SAM"/>
    <property type="match status" value="1"/>
</dbReference>
<dbReference type="PROSITE" id="PS50926">
    <property type="entry name" value="TRAM"/>
    <property type="match status" value="1"/>
</dbReference>
<comment type="function">
    <text evidence="1">Catalyzes the methylthiolation of N6-(dimethylallyl)adenosine (i(6)A), leading to the formation of 2-methylthio-N6-(dimethylallyl)adenosine (ms(2)i(6)A) at position 37 in tRNAs that read codons beginning with uridine.</text>
</comment>
<comment type="catalytic activity">
    <reaction evidence="1">
        <text>N(6)-dimethylallyladenosine(37) in tRNA + (sulfur carrier)-SH + AH2 + 2 S-adenosyl-L-methionine = 2-methylsulfanyl-N(6)-dimethylallyladenosine(37) in tRNA + (sulfur carrier)-H + 5'-deoxyadenosine + L-methionine + A + S-adenosyl-L-homocysteine + 2 H(+)</text>
        <dbReference type="Rhea" id="RHEA:37067"/>
        <dbReference type="Rhea" id="RHEA-COMP:10375"/>
        <dbReference type="Rhea" id="RHEA-COMP:10376"/>
        <dbReference type="Rhea" id="RHEA-COMP:14737"/>
        <dbReference type="Rhea" id="RHEA-COMP:14739"/>
        <dbReference type="ChEBI" id="CHEBI:13193"/>
        <dbReference type="ChEBI" id="CHEBI:15378"/>
        <dbReference type="ChEBI" id="CHEBI:17319"/>
        <dbReference type="ChEBI" id="CHEBI:17499"/>
        <dbReference type="ChEBI" id="CHEBI:29917"/>
        <dbReference type="ChEBI" id="CHEBI:57844"/>
        <dbReference type="ChEBI" id="CHEBI:57856"/>
        <dbReference type="ChEBI" id="CHEBI:59789"/>
        <dbReference type="ChEBI" id="CHEBI:64428"/>
        <dbReference type="ChEBI" id="CHEBI:74415"/>
        <dbReference type="ChEBI" id="CHEBI:74417"/>
        <dbReference type="EC" id="2.8.4.3"/>
    </reaction>
</comment>
<comment type="cofactor">
    <cofactor evidence="1">
        <name>[4Fe-4S] cluster</name>
        <dbReference type="ChEBI" id="CHEBI:49883"/>
    </cofactor>
    <text evidence="1">Binds 2 [4Fe-4S] clusters. One cluster is coordinated with 3 cysteines and an exchangeable S-adenosyl-L-methionine.</text>
</comment>
<comment type="subunit">
    <text evidence="1">Monomer.</text>
</comment>
<comment type="subcellular location">
    <subcellularLocation>
        <location evidence="1">Cytoplasm</location>
    </subcellularLocation>
</comment>
<comment type="similarity">
    <text evidence="1">Belongs to the methylthiotransferase family. MiaB subfamily.</text>
</comment>
<name>MIAB_THEPX</name>
<sequence length="471" mass="54299">MPTNIYVTEEELKKQEKIMKEIAEENKGKNLYYHIETYGCQMNVHDSEKLAGMLEKMGYKYTENLEQADVLLFNTCAVREHAEIRVLGRVSQMKELKARNPNLIIGVSGCMMQEKNVVEAIKEKYSYIDIVFGTHNIYKFPQLLWEALNSQDIVIDIIEDTKNVIEELPVKRDSNLKAWVNIIYGCNNFCTYCIVPYTRGREKSRKPEDIIAEVKELAQKGYKEITLLGQNVNSYGKDLDEDITFAKLLYKLNDIEGIERIRFMTSHPKDISDELIYAMRDLDKVCEHLHLPVQAGSNKILKKMNRKYTKEHYLEIIDKVRSNIPDIAITTDIIVGFPGETEEDFLETLDLVERVRFDAAYTFIYSKRAGTVAANMPDQVDDAVKHERLERLIELQNKISLEKSAELRGKIVEVLIEGISKRDSNKLTSRTRTNKVVHFVGDESLIGKLANVKITETKAWTMQGELVEVIR</sequence>
<gene>
    <name evidence="1" type="primary">miaB</name>
    <name type="ordered locus">Teth514_1610</name>
</gene>
<organism>
    <name type="scientific">Thermoanaerobacter sp. (strain X514)</name>
    <dbReference type="NCBI Taxonomy" id="399726"/>
    <lineage>
        <taxon>Bacteria</taxon>
        <taxon>Bacillati</taxon>
        <taxon>Bacillota</taxon>
        <taxon>Clostridia</taxon>
        <taxon>Thermoanaerobacterales</taxon>
        <taxon>Thermoanaerobacteraceae</taxon>
        <taxon>Thermoanaerobacter</taxon>
    </lineage>
</organism>
<keyword id="KW-0004">4Fe-4S</keyword>
<keyword id="KW-0963">Cytoplasm</keyword>
<keyword id="KW-0408">Iron</keyword>
<keyword id="KW-0411">Iron-sulfur</keyword>
<keyword id="KW-0479">Metal-binding</keyword>
<keyword id="KW-0949">S-adenosyl-L-methionine</keyword>
<keyword id="KW-0808">Transferase</keyword>
<keyword id="KW-0819">tRNA processing</keyword>